<proteinExistence type="inferred from homology"/>
<comment type="function">
    <text evidence="1">Catalyzes the addition and repair of the essential 3'-terminal CCA sequence in tRNAs without using a nucleic acid template. Adds these three nucleotides in the order of C, C, and A to the tRNA nucleotide-73, using CTP and ATP as substrates and producing inorganic pyrophosphate. tRNA 3'-terminal CCA addition is required both for tRNA processing and repair. Also involved in tRNA surveillance by mediating tandem CCA addition to generate a CCACCA at the 3' terminus of unstable tRNAs. While stable tRNAs receive only 3'-terminal CCA, unstable tRNAs are marked with CCACCA and rapidly degraded.</text>
</comment>
<comment type="catalytic activity">
    <reaction evidence="1">
        <text>a tRNA precursor + 2 CTP + ATP = a tRNA with a 3' CCA end + 3 diphosphate</text>
        <dbReference type="Rhea" id="RHEA:14433"/>
        <dbReference type="Rhea" id="RHEA-COMP:10465"/>
        <dbReference type="Rhea" id="RHEA-COMP:10468"/>
        <dbReference type="ChEBI" id="CHEBI:30616"/>
        <dbReference type="ChEBI" id="CHEBI:33019"/>
        <dbReference type="ChEBI" id="CHEBI:37563"/>
        <dbReference type="ChEBI" id="CHEBI:74896"/>
        <dbReference type="ChEBI" id="CHEBI:83071"/>
        <dbReference type="EC" id="2.7.7.72"/>
    </reaction>
</comment>
<comment type="catalytic activity">
    <reaction evidence="1">
        <text>a tRNA with a 3' CCA end + 2 CTP + ATP = a tRNA with a 3' CCACCA end + 3 diphosphate</text>
        <dbReference type="Rhea" id="RHEA:76235"/>
        <dbReference type="Rhea" id="RHEA-COMP:10468"/>
        <dbReference type="Rhea" id="RHEA-COMP:18655"/>
        <dbReference type="ChEBI" id="CHEBI:30616"/>
        <dbReference type="ChEBI" id="CHEBI:33019"/>
        <dbReference type="ChEBI" id="CHEBI:37563"/>
        <dbReference type="ChEBI" id="CHEBI:83071"/>
        <dbReference type="ChEBI" id="CHEBI:195187"/>
    </reaction>
    <physiologicalReaction direction="left-to-right" evidence="1">
        <dbReference type="Rhea" id="RHEA:76236"/>
    </physiologicalReaction>
</comment>
<comment type="cofactor">
    <cofactor evidence="1">
        <name>Mg(2+)</name>
        <dbReference type="ChEBI" id="CHEBI:18420"/>
    </cofactor>
    <text evidence="1">Magnesium is required for nucleotidyltransferase activity.</text>
</comment>
<comment type="cofactor">
    <cofactor evidence="1">
        <name>Ni(2+)</name>
        <dbReference type="ChEBI" id="CHEBI:49786"/>
    </cofactor>
    <text evidence="1">Nickel for phosphatase activity.</text>
</comment>
<comment type="subunit">
    <text evidence="1">Monomer. Can also form homodimers and oligomers.</text>
</comment>
<comment type="domain">
    <text evidence="1">Comprises two domains: an N-terminal domain containing the nucleotidyltransferase activity and a C-terminal HD domain associated with both phosphodiesterase and phosphatase activities.</text>
</comment>
<comment type="miscellaneous">
    <text evidence="1">A single active site specifically recognizes both ATP and CTP and is responsible for their addition.</text>
</comment>
<comment type="similarity">
    <text evidence="1">Belongs to the tRNA nucleotidyltransferase/poly(A) polymerase family. Bacterial CCA-adding enzyme type 1 subfamily.</text>
</comment>
<accession>B7NJR9</accession>
<feature type="chain" id="PRO_1000140032" description="Multifunctional CCA protein">
    <location>
        <begin position="1"/>
        <end position="412"/>
    </location>
</feature>
<feature type="domain" description="HD" evidence="1">
    <location>
        <begin position="228"/>
        <end position="329"/>
    </location>
</feature>
<feature type="binding site" evidence="1">
    <location>
        <position position="8"/>
    </location>
    <ligand>
        <name>ATP</name>
        <dbReference type="ChEBI" id="CHEBI:30616"/>
    </ligand>
</feature>
<feature type="binding site" evidence="1">
    <location>
        <position position="8"/>
    </location>
    <ligand>
        <name>CTP</name>
        <dbReference type="ChEBI" id="CHEBI:37563"/>
    </ligand>
</feature>
<feature type="binding site" evidence="1">
    <location>
        <position position="11"/>
    </location>
    <ligand>
        <name>ATP</name>
        <dbReference type="ChEBI" id="CHEBI:30616"/>
    </ligand>
</feature>
<feature type="binding site" evidence="1">
    <location>
        <position position="11"/>
    </location>
    <ligand>
        <name>CTP</name>
        <dbReference type="ChEBI" id="CHEBI:37563"/>
    </ligand>
</feature>
<feature type="binding site" evidence="1">
    <location>
        <position position="21"/>
    </location>
    <ligand>
        <name>Mg(2+)</name>
        <dbReference type="ChEBI" id="CHEBI:18420"/>
    </ligand>
</feature>
<feature type="binding site" evidence="1">
    <location>
        <position position="23"/>
    </location>
    <ligand>
        <name>Mg(2+)</name>
        <dbReference type="ChEBI" id="CHEBI:18420"/>
    </ligand>
</feature>
<feature type="binding site" evidence="1">
    <location>
        <position position="91"/>
    </location>
    <ligand>
        <name>ATP</name>
        <dbReference type="ChEBI" id="CHEBI:30616"/>
    </ligand>
</feature>
<feature type="binding site" evidence="1">
    <location>
        <position position="91"/>
    </location>
    <ligand>
        <name>CTP</name>
        <dbReference type="ChEBI" id="CHEBI:37563"/>
    </ligand>
</feature>
<feature type="binding site" evidence="1">
    <location>
        <position position="137"/>
    </location>
    <ligand>
        <name>ATP</name>
        <dbReference type="ChEBI" id="CHEBI:30616"/>
    </ligand>
</feature>
<feature type="binding site" evidence="1">
    <location>
        <position position="137"/>
    </location>
    <ligand>
        <name>CTP</name>
        <dbReference type="ChEBI" id="CHEBI:37563"/>
    </ligand>
</feature>
<feature type="binding site" evidence="1">
    <location>
        <position position="140"/>
    </location>
    <ligand>
        <name>ATP</name>
        <dbReference type="ChEBI" id="CHEBI:30616"/>
    </ligand>
</feature>
<feature type="binding site" evidence="1">
    <location>
        <position position="140"/>
    </location>
    <ligand>
        <name>CTP</name>
        <dbReference type="ChEBI" id="CHEBI:37563"/>
    </ligand>
</feature>
<name>CCA_ECO7I</name>
<protein>
    <recommendedName>
        <fullName evidence="1">Multifunctional CCA protein</fullName>
    </recommendedName>
    <domain>
        <recommendedName>
            <fullName evidence="1">CCA-adding enzyme</fullName>
            <ecNumber evidence="1">2.7.7.72</ecNumber>
        </recommendedName>
        <alternativeName>
            <fullName evidence="1">CCA tRNA nucleotidyltransferase</fullName>
        </alternativeName>
        <alternativeName>
            <fullName evidence="1">tRNA CCA-pyrophosphorylase</fullName>
        </alternativeName>
        <alternativeName>
            <fullName evidence="1">tRNA adenylyl-/cytidylyl-transferase</fullName>
        </alternativeName>
        <alternativeName>
            <fullName evidence="1">tRNA nucleotidyltransferase</fullName>
        </alternativeName>
        <alternativeName>
            <fullName evidence="1">tRNA-NT</fullName>
        </alternativeName>
    </domain>
    <domain>
        <recommendedName>
            <fullName evidence="1">2'-nucleotidase</fullName>
            <ecNumber evidence="1">3.1.3.-</ecNumber>
        </recommendedName>
    </domain>
    <domain>
        <recommendedName>
            <fullName evidence="1">2',3'-cyclic phosphodiesterase</fullName>
            <ecNumber evidence="1">3.1.4.-</ecNumber>
        </recommendedName>
    </domain>
    <domain>
        <recommendedName>
            <fullName evidence="1">Phosphatase</fullName>
            <ecNumber evidence="1">3.1.3.-</ecNumber>
        </recommendedName>
    </domain>
</protein>
<reference key="1">
    <citation type="journal article" date="2009" name="PLoS Genet.">
        <title>Organised genome dynamics in the Escherichia coli species results in highly diverse adaptive paths.</title>
        <authorList>
            <person name="Touchon M."/>
            <person name="Hoede C."/>
            <person name="Tenaillon O."/>
            <person name="Barbe V."/>
            <person name="Baeriswyl S."/>
            <person name="Bidet P."/>
            <person name="Bingen E."/>
            <person name="Bonacorsi S."/>
            <person name="Bouchier C."/>
            <person name="Bouvet O."/>
            <person name="Calteau A."/>
            <person name="Chiapello H."/>
            <person name="Clermont O."/>
            <person name="Cruveiller S."/>
            <person name="Danchin A."/>
            <person name="Diard M."/>
            <person name="Dossat C."/>
            <person name="Karoui M.E."/>
            <person name="Frapy E."/>
            <person name="Garry L."/>
            <person name="Ghigo J.M."/>
            <person name="Gilles A.M."/>
            <person name="Johnson J."/>
            <person name="Le Bouguenec C."/>
            <person name="Lescat M."/>
            <person name="Mangenot S."/>
            <person name="Martinez-Jehanne V."/>
            <person name="Matic I."/>
            <person name="Nassif X."/>
            <person name="Oztas S."/>
            <person name="Petit M.A."/>
            <person name="Pichon C."/>
            <person name="Rouy Z."/>
            <person name="Ruf C.S."/>
            <person name="Schneider D."/>
            <person name="Tourret J."/>
            <person name="Vacherie B."/>
            <person name="Vallenet D."/>
            <person name="Medigue C."/>
            <person name="Rocha E.P.C."/>
            <person name="Denamur E."/>
        </authorList>
    </citation>
    <scope>NUCLEOTIDE SEQUENCE [LARGE SCALE GENOMIC DNA]</scope>
    <source>
        <strain>IAI39 / ExPEC</strain>
    </source>
</reference>
<gene>
    <name evidence="1" type="primary">cca</name>
    <name type="ordered locus">ECIAI39_3552</name>
</gene>
<dbReference type="EC" id="2.7.7.72" evidence="1"/>
<dbReference type="EC" id="3.1.3.-" evidence="1"/>
<dbReference type="EC" id="3.1.4.-" evidence="1"/>
<dbReference type="EMBL" id="CU928164">
    <property type="protein sequence ID" value="CAR19668.1"/>
    <property type="molecule type" value="Genomic_DNA"/>
</dbReference>
<dbReference type="RefSeq" id="WP_000708468.1">
    <property type="nucleotide sequence ID" value="NC_011750.1"/>
</dbReference>
<dbReference type="RefSeq" id="YP_002409456.1">
    <property type="nucleotide sequence ID" value="NC_011750.1"/>
</dbReference>
<dbReference type="SMR" id="B7NJR9"/>
<dbReference type="STRING" id="585057.ECIAI39_3552"/>
<dbReference type="KEGG" id="ect:ECIAI39_3552"/>
<dbReference type="PATRIC" id="fig|585057.6.peg.3680"/>
<dbReference type="HOGENOM" id="CLU_015961_1_1_6"/>
<dbReference type="Proteomes" id="UP000000749">
    <property type="component" value="Chromosome"/>
</dbReference>
<dbReference type="GO" id="GO:0005524">
    <property type="term" value="F:ATP binding"/>
    <property type="evidence" value="ECO:0007669"/>
    <property type="project" value="UniProtKB-UniRule"/>
</dbReference>
<dbReference type="GO" id="GO:0004810">
    <property type="term" value="F:CCA tRNA nucleotidyltransferase activity"/>
    <property type="evidence" value="ECO:0007669"/>
    <property type="project" value="UniProtKB-UniRule"/>
</dbReference>
<dbReference type="GO" id="GO:0004112">
    <property type="term" value="F:cyclic-nucleotide phosphodiesterase activity"/>
    <property type="evidence" value="ECO:0007669"/>
    <property type="project" value="UniProtKB-UniRule"/>
</dbReference>
<dbReference type="GO" id="GO:0000287">
    <property type="term" value="F:magnesium ion binding"/>
    <property type="evidence" value="ECO:0007669"/>
    <property type="project" value="UniProtKB-UniRule"/>
</dbReference>
<dbReference type="GO" id="GO:0016791">
    <property type="term" value="F:phosphatase activity"/>
    <property type="evidence" value="ECO:0007669"/>
    <property type="project" value="UniProtKB-UniRule"/>
</dbReference>
<dbReference type="GO" id="GO:0000049">
    <property type="term" value="F:tRNA binding"/>
    <property type="evidence" value="ECO:0007669"/>
    <property type="project" value="UniProtKB-UniRule"/>
</dbReference>
<dbReference type="GO" id="GO:0042245">
    <property type="term" value="P:RNA repair"/>
    <property type="evidence" value="ECO:0007669"/>
    <property type="project" value="UniProtKB-KW"/>
</dbReference>
<dbReference type="GO" id="GO:0001680">
    <property type="term" value="P:tRNA 3'-terminal CCA addition"/>
    <property type="evidence" value="ECO:0007669"/>
    <property type="project" value="UniProtKB-UniRule"/>
</dbReference>
<dbReference type="CDD" id="cd00077">
    <property type="entry name" value="HDc"/>
    <property type="match status" value="1"/>
</dbReference>
<dbReference type="CDD" id="cd05398">
    <property type="entry name" value="NT_ClassII-CCAase"/>
    <property type="match status" value="1"/>
</dbReference>
<dbReference type="FunFam" id="1.10.3090.10:FF:000001">
    <property type="entry name" value="Multifunctional CCA protein"/>
    <property type="match status" value="1"/>
</dbReference>
<dbReference type="FunFam" id="3.30.460.10:FF:000016">
    <property type="entry name" value="Multifunctional CCA protein"/>
    <property type="match status" value="1"/>
</dbReference>
<dbReference type="Gene3D" id="3.30.460.10">
    <property type="entry name" value="Beta Polymerase, domain 2"/>
    <property type="match status" value="1"/>
</dbReference>
<dbReference type="Gene3D" id="1.10.3090.10">
    <property type="entry name" value="cca-adding enzyme, domain 2"/>
    <property type="match status" value="1"/>
</dbReference>
<dbReference type="HAMAP" id="MF_01261">
    <property type="entry name" value="CCA_bact_type1"/>
    <property type="match status" value="1"/>
</dbReference>
<dbReference type="HAMAP" id="MF_01262">
    <property type="entry name" value="CCA_bact_type2"/>
    <property type="match status" value="1"/>
</dbReference>
<dbReference type="InterPro" id="IPR012006">
    <property type="entry name" value="CCA_bact"/>
</dbReference>
<dbReference type="InterPro" id="IPR003607">
    <property type="entry name" value="HD/PDEase_dom"/>
</dbReference>
<dbReference type="InterPro" id="IPR006674">
    <property type="entry name" value="HD_domain"/>
</dbReference>
<dbReference type="InterPro" id="IPR043519">
    <property type="entry name" value="NT_sf"/>
</dbReference>
<dbReference type="InterPro" id="IPR002646">
    <property type="entry name" value="PolA_pol_head_dom"/>
</dbReference>
<dbReference type="InterPro" id="IPR032828">
    <property type="entry name" value="PolyA_RNA-bd"/>
</dbReference>
<dbReference type="InterPro" id="IPR050124">
    <property type="entry name" value="tRNA_CCA-adding_enzyme"/>
</dbReference>
<dbReference type="NCBIfam" id="NF008137">
    <property type="entry name" value="PRK10885.1"/>
    <property type="match status" value="1"/>
</dbReference>
<dbReference type="PANTHER" id="PTHR47545">
    <property type="entry name" value="MULTIFUNCTIONAL CCA PROTEIN"/>
    <property type="match status" value="1"/>
</dbReference>
<dbReference type="PANTHER" id="PTHR47545:SF1">
    <property type="entry name" value="MULTIFUNCTIONAL CCA PROTEIN"/>
    <property type="match status" value="1"/>
</dbReference>
<dbReference type="Pfam" id="PF01966">
    <property type="entry name" value="HD"/>
    <property type="match status" value="1"/>
</dbReference>
<dbReference type="Pfam" id="PF01743">
    <property type="entry name" value="PolyA_pol"/>
    <property type="match status" value="1"/>
</dbReference>
<dbReference type="Pfam" id="PF12627">
    <property type="entry name" value="PolyA_pol_RNAbd"/>
    <property type="match status" value="1"/>
</dbReference>
<dbReference type="PIRSF" id="PIRSF000813">
    <property type="entry name" value="CCA_bact"/>
    <property type="match status" value="1"/>
</dbReference>
<dbReference type="SUPFAM" id="SSF81301">
    <property type="entry name" value="Nucleotidyltransferase"/>
    <property type="match status" value="1"/>
</dbReference>
<dbReference type="SUPFAM" id="SSF81891">
    <property type="entry name" value="Poly A polymerase C-terminal region-like"/>
    <property type="match status" value="1"/>
</dbReference>
<dbReference type="PROSITE" id="PS51831">
    <property type="entry name" value="HD"/>
    <property type="match status" value="1"/>
</dbReference>
<keyword id="KW-0067">ATP-binding</keyword>
<keyword id="KW-0378">Hydrolase</keyword>
<keyword id="KW-0460">Magnesium</keyword>
<keyword id="KW-0479">Metal-binding</keyword>
<keyword id="KW-0511">Multifunctional enzyme</keyword>
<keyword id="KW-0533">Nickel</keyword>
<keyword id="KW-0547">Nucleotide-binding</keyword>
<keyword id="KW-0548">Nucleotidyltransferase</keyword>
<keyword id="KW-0692">RNA repair</keyword>
<keyword id="KW-0694">RNA-binding</keyword>
<keyword id="KW-0808">Transferase</keyword>
<keyword id="KW-0819">tRNA processing</keyword>
<organism>
    <name type="scientific">Escherichia coli O7:K1 (strain IAI39 / ExPEC)</name>
    <dbReference type="NCBI Taxonomy" id="585057"/>
    <lineage>
        <taxon>Bacteria</taxon>
        <taxon>Pseudomonadati</taxon>
        <taxon>Pseudomonadota</taxon>
        <taxon>Gammaproteobacteria</taxon>
        <taxon>Enterobacterales</taxon>
        <taxon>Enterobacteriaceae</taxon>
        <taxon>Escherichia</taxon>
    </lineage>
</organism>
<evidence type="ECO:0000255" key="1">
    <source>
        <dbReference type="HAMAP-Rule" id="MF_01261"/>
    </source>
</evidence>
<sequence>MKIYLVGGAVRDALLGLPVKDRDWVVVGSTPQEMLDAGYQQIGRDFPVFLHPQTHEEYALARTERKSGSGYTGFTCYAAPDVTLEDDLKRRDLTINALAQDDNGEIIDPYNGLGDLQNRLLRHVSPAFGEDPLRVLRVARFAARYAHLGFRIADETLALMREMTHAGELEHLTPERVWKETESALTTRNPQVFFQVLRDCGALRVLFPEIDALFGVPAPAKWHPEIDTGIHTLMTLSMAAMLSPQVDVRFATLCHDLGKGLTPPELWPRHHGHGPAGVKLVEQLCQRLRVPNEIRDLARLVAEFHDLIHTFPMLNPKTIVKLFDSIDAWRKPQRVEQLALTSEADVRGRTGFESADYPQGRWLREAWEVAQSVPTKAVVEAGFKGVEIREELTRRRIAAVASWKEQRCPKPE</sequence>